<protein>
    <recommendedName>
        <fullName evidence="1">Probable phosphoketolase</fullName>
        <ecNumber evidence="1">4.1.2.-</ecNumber>
    </recommendedName>
</protein>
<dbReference type="EC" id="4.1.2.-" evidence="1"/>
<dbReference type="EMBL" id="BA000030">
    <property type="protein sequence ID" value="BAC68983.1"/>
    <property type="molecule type" value="Genomic_DNA"/>
</dbReference>
<dbReference type="RefSeq" id="WP_010982711.1">
    <property type="nucleotide sequence ID" value="NZ_JZJK01000078.1"/>
</dbReference>
<dbReference type="SMR" id="Q82NM9"/>
<dbReference type="GeneID" id="41538373"/>
<dbReference type="KEGG" id="sma:SAVERM_1273"/>
<dbReference type="eggNOG" id="COG3957">
    <property type="taxonomic scope" value="Bacteria"/>
</dbReference>
<dbReference type="HOGENOM" id="CLU_013954_2_0_11"/>
<dbReference type="OrthoDB" id="9768449at2"/>
<dbReference type="Proteomes" id="UP000000428">
    <property type="component" value="Chromosome"/>
</dbReference>
<dbReference type="GO" id="GO:0016832">
    <property type="term" value="F:aldehyde-lyase activity"/>
    <property type="evidence" value="ECO:0007669"/>
    <property type="project" value="UniProtKB-UniRule"/>
</dbReference>
<dbReference type="GO" id="GO:0000287">
    <property type="term" value="F:magnesium ion binding"/>
    <property type="evidence" value="ECO:0007669"/>
    <property type="project" value="UniProtKB-ARBA"/>
</dbReference>
<dbReference type="GO" id="GO:0005975">
    <property type="term" value="P:carbohydrate metabolic process"/>
    <property type="evidence" value="ECO:0007669"/>
    <property type="project" value="InterPro"/>
</dbReference>
<dbReference type="CDD" id="cd02011">
    <property type="entry name" value="TPP_PK"/>
    <property type="match status" value="1"/>
</dbReference>
<dbReference type="Gene3D" id="3.40.50.920">
    <property type="match status" value="1"/>
</dbReference>
<dbReference type="Gene3D" id="3.40.50.970">
    <property type="match status" value="2"/>
</dbReference>
<dbReference type="HAMAP" id="MF_01403">
    <property type="entry name" value="Phosphoketolase"/>
    <property type="match status" value="1"/>
</dbReference>
<dbReference type="InterPro" id="IPR023962">
    <property type="entry name" value="Phosphoketolase"/>
</dbReference>
<dbReference type="InterPro" id="IPR029061">
    <property type="entry name" value="THDP-binding"/>
</dbReference>
<dbReference type="InterPro" id="IPR009014">
    <property type="entry name" value="Transketo_C/PFOR_II"/>
</dbReference>
<dbReference type="InterPro" id="IPR005593">
    <property type="entry name" value="Xul5P/Fru6P_PKetolase"/>
</dbReference>
<dbReference type="InterPro" id="IPR018969">
    <property type="entry name" value="Xul5P/Fru6P_PKetolase_C"/>
</dbReference>
<dbReference type="InterPro" id="IPR019790">
    <property type="entry name" value="Xul5P/Fru6P_PKetolase_CS"/>
</dbReference>
<dbReference type="InterPro" id="IPR018970">
    <property type="entry name" value="Xul5P/Fru6P_PKetolase_N"/>
</dbReference>
<dbReference type="InterPro" id="IPR019789">
    <property type="entry name" value="Xul5P/Fru6P_PKetolase_ThDP_BS"/>
</dbReference>
<dbReference type="NCBIfam" id="NF003617">
    <property type="entry name" value="PRK05261.1-2"/>
    <property type="match status" value="1"/>
</dbReference>
<dbReference type="NCBIfam" id="NF003619">
    <property type="entry name" value="PRK05261.1-4"/>
    <property type="match status" value="1"/>
</dbReference>
<dbReference type="NCBIfam" id="NF003621">
    <property type="entry name" value="PRK05261.1-6"/>
    <property type="match status" value="1"/>
</dbReference>
<dbReference type="PANTHER" id="PTHR31273">
    <property type="entry name" value="PHOSPHOKETOLASE-RELATED"/>
    <property type="match status" value="1"/>
</dbReference>
<dbReference type="PANTHER" id="PTHR31273:SF0">
    <property type="entry name" value="PHOSPHOKETOLASE-RELATED"/>
    <property type="match status" value="1"/>
</dbReference>
<dbReference type="Pfam" id="PF03894">
    <property type="entry name" value="XFP"/>
    <property type="match status" value="1"/>
</dbReference>
<dbReference type="Pfam" id="PF09363">
    <property type="entry name" value="XFP_C"/>
    <property type="match status" value="1"/>
</dbReference>
<dbReference type="Pfam" id="PF09364">
    <property type="entry name" value="XFP_N"/>
    <property type="match status" value="1"/>
</dbReference>
<dbReference type="PIRSF" id="PIRSF017245">
    <property type="entry name" value="Phosphoketolase"/>
    <property type="match status" value="1"/>
</dbReference>
<dbReference type="SUPFAM" id="SSF52518">
    <property type="entry name" value="Thiamin diphosphate-binding fold (THDP-binding)"/>
    <property type="match status" value="2"/>
</dbReference>
<dbReference type="PROSITE" id="PS60002">
    <property type="entry name" value="PHOSPHOKETOLASE_1"/>
    <property type="match status" value="1"/>
</dbReference>
<dbReference type="PROSITE" id="PS60003">
    <property type="entry name" value="PHOSPHOKETOLASE_2"/>
    <property type="match status" value="1"/>
</dbReference>
<feature type="chain" id="PRO_0000193890" description="Probable phosphoketolase">
    <location>
        <begin position="1"/>
        <end position="793"/>
    </location>
</feature>
<sequence>MPQVEHQNSTVLTDDELRTLDAHWRAANYLAAGQIYLLANALLTEPLSPAHIKPRLLGHWGTSPGLNLVHTHLNRVIKARDLDALCVWGPGHGGPAVLANSWLEGSYSETYPDISRDAAGMGKLFRQFSFPGGVPSHVAPETPGSIHEGGELGYSLAHAYGAAFDNPDLLVACVIGDGEAETGPLAASWHSNKFLDPVHDGAVLPILHLNGYKIANPTVLSRIPEPELDELLRGYGHEPLHVTGDDPHQVHRALAEAFDRALDRVALMQRTAREEGATERIRWPMIVLRTPKGWTGPAEVDGRPVEGTWRAHQVPLPEVRENPEHLRQLEGWLRSYRPEELFDADGRPTADVLACVPHGARRLGATPHANGGLLLRPLPIPPLDRFAVAVDKPGATLHEPTRVLGDLLEQVMKDTSARRDFRLVGPDETASNRLDAVFDASGKAWQAQTLPVDEHLDRHGRVMEILSEHTCQGWLEGYLLTGRHGLFSCYEAFVHIVDSMVNQHIKWLKTSRELAWRAPIASLNYLLTSHVWRQDHNGFSHQDPGFVDHVLNKSPEAVRVYLPPDANTLLSVADHVLRSRDYVNVVVAGKQPCFDWLSMEQARAHCARGAGIWEWAGTQNDGEPDVVLACAGDVPTQEVLAASALLRRHLPALAVRVVNVVDMTRLLPREAHPHGMSDFEYDGLFTTDKPVIFAYHGYPWLIHRLAYSRTGHGNLHVRGYKEMGTTTTPFDMVVRNDLDRYRLVMDVVDRVPGLGVRAAAVRQTMADARTRHHAWIREHGTDLPEVANWTWEA</sequence>
<keyword id="KW-0456">Lyase</keyword>
<keyword id="KW-1185">Reference proteome</keyword>
<keyword id="KW-0786">Thiamine pyrophosphate</keyword>
<evidence type="ECO:0000255" key="1">
    <source>
        <dbReference type="HAMAP-Rule" id="MF_01403"/>
    </source>
</evidence>
<name>PHK_STRAW</name>
<comment type="cofactor">
    <cofactor evidence="1">
        <name>thiamine diphosphate</name>
        <dbReference type="ChEBI" id="CHEBI:58937"/>
    </cofactor>
</comment>
<comment type="similarity">
    <text evidence="1">Belongs to the XFP family.</text>
</comment>
<organism>
    <name type="scientific">Streptomyces avermitilis (strain ATCC 31267 / DSM 46492 / JCM 5070 / NBRC 14893 / NCIMB 12804 / NRRL 8165 / MA-4680)</name>
    <dbReference type="NCBI Taxonomy" id="227882"/>
    <lineage>
        <taxon>Bacteria</taxon>
        <taxon>Bacillati</taxon>
        <taxon>Actinomycetota</taxon>
        <taxon>Actinomycetes</taxon>
        <taxon>Kitasatosporales</taxon>
        <taxon>Streptomycetaceae</taxon>
        <taxon>Streptomyces</taxon>
    </lineage>
</organism>
<accession>Q82NM9</accession>
<gene>
    <name type="ordered locus">SAV_1273</name>
</gene>
<reference key="1">
    <citation type="journal article" date="2001" name="Proc. Natl. Acad. Sci. U.S.A.">
        <title>Genome sequence of an industrial microorganism Streptomyces avermitilis: deducing the ability of producing secondary metabolites.</title>
        <authorList>
            <person name="Omura S."/>
            <person name="Ikeda H."/>
            <person name="Ishikawa J."/>
            <person name="Hanamoto A."/>
            <person name="Takahashi C."/>
            <person name="Shinose M."/>
            <person name="Takahashi Y."/>
            <person name="Horikawa H."/>
            <person name="Nakazawa H."/>
            <person name="Osonoe T."/>
            <person name="Kikuchi H."/>
            <person name="Shiba T."/>
            <person name="Sakaki Y."/>
            <person name="Hattori M."/>
        </authorList>
    </citation>
    <scope>NUCLEOTIDE SEQUENCE [LARGE SCALE GENOMIC DNA]</scope>
    <source>
        <strain>ATCC 31267 / DSM 46492 / JCM 5070 / NBRC 14893 / NCIMB 12804 / NRRL 8165 / MA-4680</strain>
    </source>
</reference>
<reference key="2">
    <citation type="journal article" date="2003" name="Nat. Biotechnol.">
        <title>Complete genome sequence and comparative analysis of the industrial microorganism Streptomyces avermitilis.</title>
        <authorList>
            <person name="Ikeda H."/>
            <person name="Ishikawa J."/>
            <person name="Hanamoto A."/>
            <person name="Shinose M."/>
            <person name="Kikuchi H."/>
            <person name="Shiba T."/>
            <person name="Sakaki Y."/>
            <person name="Hattori M."/>
            <person name="Omura S."/>
        </authorList>
    </citation>
    <scope>NUCLEOTIDE SEQUENCE [LARGE SCALE GENOMIC DNA]</scope>
    <source>
        <strain>ATCC 31267 / DSM 46492 / JCM 5070 / NBRC 14893 / NCIMB 12804 / NRRL 8165 / MA-4680</strain>
    </source>
</reference>
<proteinExistence type="inferred from homology"/>